<keyword id="KW-0002">3D-structure</keyword>
<keyword id="KW-0150">Chloroplast</keyword>
<keyword id="KW-0903">Direct protein sequencing</keyword>
<keyword id="KW-0602">Photosynthesis</keyword>
<keyword id="KW-0603">Photosystem I</keyword>
<keyword id="KW-0934">Plastid</keyword>
<keyword id="KW-0793">Thylakoid</keyword>
<keyword id="KW-0809">Transit peptide</keyword>
<reference key="1">
    <citation type="journal article" date="1989" name="Plant Mol. Biol.">
        <title>Isolation and characterization of cDNA clones encoding the 17.9 and 8.1 kDa subunits of photosystem I from Chlamydomonas reinhardtii.</title>
        <authorList>
            <person name="Franzen L.-G."/>
            <person name="Frank G."/>
            <person name="Zuber H."/>
            <person name="Rochaix J.-D."/>
        </authorList>
    </citation>
    <scope>NUCLEOTIDE SEQUENCE</scope>
    <scope>PARTIAL PROTEIN SEQUENCE</scope>
    <source>
        <strain>137c / CC-125</strain>
    </source>
</reference>
<reference key="2">
    <citation type="submission" date="1999-03" db="EMBL/GenBank/DDBJ databases">
        <title>Chlamydomonas reinhardtii psaF gene encoding subunit F of photosystem I.</title>
        <authorList>
            <person name="Stevens D.R."/>
            <person name="Hippler M."/>
            <person name="Rochaix J.-D."/>
            <person name="Purton S."/>
        </authorList>
    </citation>
    <scope>NUCLEOTIDE SEQUENCE</scope>
    <source>
        <strain>137C / CW15</strain>
    </source>
</reference>
<organism>
    <name type="scientific">Chlamydomonas reinhardtii</name>
    <name type="common">Chlamydomonas smithii</name>
    <dbReference type="NCBI Taxonomy" id="3055"/>
    <lineage>
        <taxon>Eukaryota</taxon>
        <taxon>Viridiplantae</taxon>
        <taxon>Chlorophyta</taxon>
        <taxon>core chlorophytes</taxon>
        <taxon>Chlorophyceae</taxon>
        <taxon>CS clade</taxon>
        <taxon>Chlamydomonadales</taxon>
        <taxon>Chlamydomonadaceae</taxon>
        <taxon>Chlamydomonas</taxon>
    </lineage>
</organism>
<sequence length="227" mass="24057">MALTMRNPAVKASSRVAPSSRRALRVACQAQKNETASKVGTALAASALAAAVSLSAPSAAMADIAGLTPCSESKAYAKLEKKELKTLEKRLKQYEADSAPAVALKATMERTKARFANYAKAGLLCGNDGLPHLIADPGLALKYGHAGEVFIPTFGFLYVAGYIGYVGRQYLIAVKGEAKPTDKEIIIDVPLATKLAWQGAGWPLAAVQELQRGTLLEKEENITVSPR</sequence>
<gene>
    <name type="primary">PSAF</name>
</gene>
<accession>P12356</accession>
<comment type="function">
    <text>Probably participates in efficiency of electron transfer from plastocyanin to P700 (or cytochrome c553 in algae and cyanobacteria). This plastocyanin-docking protein contributes to the specific association of plastocyanin to PSI.</text>
</comment>
<comment type="interaction">
    <interactant intactId="EBI-601814">
        <id>P12356</id>
    </interactant>
    <interactant intactId="EBI-601809">
        <id>Q39615</id>
        <label>psaD</label>
    </interactant>
    <organismsDiffer>false</organismsDiffer>
    <experiments>2</experiments>
</comment>
<comment type="subcellular location">
    <subcellularLocation>
        <location>Plastid</location>
        <location>Chloroplast thylakoid lumen</location>
    </subcellularLocation>
</comment>
<comment type="similarity">
    <text evidence="1">Belongs to the PsaF family.</text>
</comment>
<protein>
    <recommendedName>
        <fullName>Photosystem I reaction center subunit III, chloroplastic</fullName>
    </recommendedName>
    <alternativeName>
        <fullName>Light-harvesting complex I 17 kDa protein</fullName>
    </alternativeName>
    <alternativeName>
        <fullName>P21 protein</fullName>
    </alternativeName>
    <alternativeName>
        <fullName>PSI-F</fullName>
    </alternativeName>
</protein>
<name>PSAF_CHLRE</name>
<feature type="transit peptide" description="Chloroplast">
    <location>
        <begin position="1"/>
        <end position="62"/>
    </location>
</feature>
<feature type="chain" id="PRO_0000029343" description="Photosystem I reaction center subunit III, chloroplastic">
    <location>
        <begin position="63"/>
        <end position="227"/>
    </location>
</feature>
<feature type="sequence variant">
    <original>G</original>
    <variation>D</variation>
    <location>
        <position position="167"/>
    </location>
</feature>
<feature type="helix" evidence="5">
    <location>
        <begin position="64"/>
        <end position="66"/>
    </location>
</feature>
<feature type="helix" evidence="5">
    <location>
        <begin position="70"/>
        <end position="72"/>
    </location>
</feature>
<feature type="helix" evidence="5">
    <location>
        <begin position="74"/>
        <end position="91"/>
    </location>
</feature>
<feature type="strand" evidence="4">
    <location>
        <begin position="96"/>
        <end position="98"/>
    </location>
</feature>
<feature type="helix" evidence="5">
    <location>
        <begin position="99"/>
        <end position="120"/>
    </location>
</feature>
<feature type="strand" evidence="3">
    <location>
        <begin position="127"/>
        <end position="129"/>
    </location>
</feature>
<feature type="strand" evidence="5">
    <location>
        <begin position="131"/>
        <end position="133"/>
    </location>
</feature>
<feature type="helix" evidence="5">
    <location>
        <begin position="137"/>
        <end position="143"/>
    </location>
</feature>
<feature type="turn" evidence="5">
    <location>
        <begin position="146"/>
        <end position="149"/>
    </location>
</feature>
<feature type="helix" evidence="5">
    <location>
        <begin position="150"/>
        <end position="175"/>
    </location>
</feature>
<feature type="strand" evidence="2">
    <location>
        <begin position="176"/>
        <end position="178"/>
    </location>
</feature>
<feature type="helix" evidence="5">
    <location>
        <begin position="180"/>
        <end position="185"/>
    </location>
</feature>
<feature type="helix" evidence="5">
    <location>
        <begin position="189"/>
        <end position="198"/>
    </location>
</feature>
<feature type="helix" evidence="5">
    <location>
        <begin position="199"/>
        <end position="201"/>
    </location>
</feature>
<feature type="helix" evidence="5">
    <location>
        <begin position="202"/>
        <end position="211"/>
    </location>
</feature>
<feature type="helix" evidence="5">
    <location>
        <begin position="219"/>
        <end position="221"/>
    </location>
</feature>
<dbReference type="EMBL" id="X13495">
    <property type="protein sequence ID" value="CAA31849.1"/>
    <property type="molecule type" value="mRNA"/>
</dbReference>
<dbReference type="EMBL" id="AF135791">
    <property type="protein sequence ID" value="AAD27871.1"/>
    <property type="molecule type" value="Genomic_DNA"/>
</dbReference>
<dbReference type="PIR" id="S04133">
    <property type="entry name" value="S04133"/>
</dbReference>
<dbReference type="RefSeq" id="XP_001696798.1">
    <property type="nucleotide sequence ID" value="XM_001696746.1"/>
</dbReference>
<dbReference type="PDB" id="6IJJ">
    <property type="method" value="EM"/>
    <property type="resolution" value="2.89 A"/>
    <property type="chains" value="F=1-227"/>
</dbReference>
<dbReference type="PDB" id="6IJO">
    <property type="method" value="EM"/>
    <property type="resolution" value="3.30 A"/>
    <property type="chains" value="F=1-227"/>
</dbReference>
<dbReference type="PDB" id="6JO5">
    <property type="method" value="EM"/>
    <property type="resolution" value="2.90 A"/>
    <property type="chains" value="F=63-227"/>
</dbReference>
<dbReference type="PDB" id="6JO6">
    <property type="method" value="EM"/>
    <property type="resolution" value="2.90 A"/>
    <property type="chains" value="F=63-227"/>
</dbReference>
<dbReference type="PDB" id="7BGI">
    <property type="method" value="EM"/>
    <property type="resolution" value="2.54 A"/>
    <property type="chains" value="F=63-227"/>
</dbReference>
<dbReference type="PDB" id="7BLX">
    <property type="method" value="EM"/>
    <property type="resolution" value="3.15 A"/>
    <property type="chains" value="F=63-227"/>
</dbReference>
<dbReference type="PDB" id="7D0J">
    <property type="method" value="EM"/>
    <property type="resolution" value="3.42 A"/>
    <property type="chains" value="F=63-227"/>
</dbReference>
<dbReference type="PDB" id="7DZ7">
    <property type="method" value="EM"/>
    <property type="resolution" value="2.84 A"/>
    <property type="chains" value="F=1-227"/>
</dbReference>
<dbReference type="PDB" id="7DZ8">
    <property type="method" value="EM"/>
    <property type="resolution" value="3.16 A"/>
    <property type="chains" value="F=1-227"/>
</dbReference>
<dbReference type="PDB" id="7O01">
    <property type="method" value="EM"/>
    <property type="resolution" value="17.10 A"/>
    <property type="chains" value="F/f=63-227"/>
</dbReference>
<dbReference type="PDB" id="7R3K">
    <property type="method" value="EM"/>
    <property type="resolution" value="2.52 A"/>
    <property type="chains" value="F=1-227"/>
</dbReference>
<dbReference type="PDB" id="7WYI">
    <property type="method" value="EM"/>
    <property type="resolution" value="3.90 A"/>
    <property type="chains" value="F=1-227"/>
</dbReference>
<dbReference type="PDB" id="7WZN">
    <property type="method" value="EM"/>
    <property type="resolution" value="4.90 A"/>
    <property type="chains" value="F=1-227"/>
</dbReference>
<dbReference type="PDB" id="7ZQ9">
    <property type="method" value="EM"/>
    <property type="resolution" value="2.74 A"/>
    <property type="chains" value="F=1-227"/>
</dbReference>
<dbReference type="PDB" id="7ZQC">
    <property type="method" value="EM"/>
    <property type="resolution" value="2.31 A"/>
    <property type="chains" value="F=1-227"/>
</dbReference>
<dbReference type="PDB" id="7ZQD">
    <property type="method" value="EM"/>
    <property type="resolution" value="2.97 A"/>
    <property type="chains" value="F/F2=1-227"/>
</dbReference>
<dbReference type="PDB" id="8H2U">
    <property type="method" value="X-ray"/>
    <property type="resolution" value="3.40 A"/>
    <property type="chains" value="F=1-227"/>
</dbReference>
<dbReference type="PDBsum" id="6IJJ"/>
<dbReference type="PDBsum" id="6IJO"/>
<dbReference type="PDBsum" id="6JO5"/>
<dbReference type="PDBsum" id="6JO6"/>
<dbReference type="PDBsum" id="7BGI"/>
<dbReference type="PDBsum" id="7BLX"/>
<dbReference type="PDBsum" id="7D0J"/>
<dbReference type="PDBsum" id="7DZ7"/>
<dbReference type="PDBsum" id="7DZ8"/>
<dbReference type="PDBsum" id="7O01"/>
<dbReference type="PDBsum" id="7R3K"/>
<dbReference type="PDBsum" id="7WYI"/>
<dbReference type="PDBsum" id="7WZN"/>
<dbReference type="PDBsum" id="7ZQ9"/>
<dbReference type="PDBsum" id="7ZQC"/>
<dbReference type="PDBsum" id="7ZQD"/>
<dbReference type="PDBsum" id="8H2U"/>
<dbReference type="EMDB" id="EMD-12180"/>
<dbReference type="EMDB" id="EMD-12227"/>
<dbReference type="EMDB" id="EMD-12672"/>
<dbReference type="EMDB" id="EMD-14248"/>
<dbReference type="EMDB" id="EMD-14867"/>
<dbReference type="EMDB" id="EMD-14870"/>
<dbReference type="EMDB" id="EMD-14871"/>
<dbReference type="EMDB" id="EMD-30536"/>
<dbReference type="EMDB" id="EMD-30925"/>
<dbReference type="EMDB" id="EMD-30926"/>
<dbReference type="EMDB" id="EMD-32892"/>
<dbReference type="EMDB" id="EMD-32907"/>
<dbReference type="EMDB" id="EMD-9678"/>
<dbReference type="EMDB" id="EMD-9680"/>
<dbReference type="EMDB" id="EMD-9853"/>
<dbReference type="EMDB" id="EMD-9854"/>
<dbReference type="SMR" id="P12356"/>
<dbReference type="DIP" id="DIP-34986N"/>
<dbReference type="IntAct" id="P12356">
    <property type="interactions" value="8"/>
</dbReference>
<dbReference type="PaxDb" id="3055-EDP00906"/>
<dbReference type="ProMEX" id="P12356"/>
<dbReference type="EnsemblPlants" id="PNW79354">
    <property type="protein sequence ID" value="PNW79354"/>
    <property type="gene ID" value="CHLRE_09g412100v5"/>
</dbReference>
<dbReference type="Gramene" id="PNW79354">
    <property type="protein sequence ID" value="PNW79354"/>
    <property type="gene ID" value="CHLRE_09g412100v5"/>
</dbReference>
<dbReference type="KEGG" id="cre:CHLRE_09g412100v5"/>
<dbReference type="eggNOG" id="ENOG502QTZ8">
    <property type="taxonomic scope" value="Eukaryota"/>
</dbReference>
<dbReference type="HOGENOM" id="CLU_098828_0_0_1"/>
<dbReference type="OMA" id="CGNDGLP"/>
<dbReference type="OrthoDB" id="1920411at2759"/>
<dbReference type="BioCyc" id="CHLAMY:CHLREDRAFT_130914-MONOMER"/>
<dbReference type="BioCyc" id="MetaCyc:CHLREDRAFT_130914-MONOMER"/>
<dbReference type="GO" id="GO:0009543">
    <property type="term" value="C:chloroplast thylakoid lumen"/>
    <property type="evidence" value="ECO:0007669"/>
    <property type="project" value="UniProtKB-SubCell"/>
</dbReference>
<dbReference type="GO" id="GO:0009538">
    <property type="term" value="C:photosystem I reaction center"/>
    <property type="evidence" value="ECO:0007669"/>
    <property type="project" value="InterPro"/>
</dbReference>
<dbReference type="GO" id="GO:0015979">
    <property type="term" value="P:photosynthesis"/>
    <property type="evidence" value="ECO:0007669"/>
    <property type="project" value="UniProtKB-KW"/>
</dbReference>
<dbReference type="FunFam" id="1.10.8.110:FF:000001">
    <property type="entry name" value="Photosystem I reaction center subunit III"/>
    <property type="match status" value="1"/>
</dbReference>
<dbReference type="Gene3D" id="1.10.8.110">
    <property type="entry name" value="Photosystem I PsaF, reaction centre subunit III"/>
    <property type="match status" value="1"/>
</dbReference>
<dbReference type="InterPro" id="IPR003666">
    <property type="entry name" value="PSI_PsaF"/>
</dbReference>
<dbReference type="InterPro" id="IPR036577">
    <property type="entry name" value="PSI_PsaF_sf"/>
</dbReference>
<dbReference type="PANTHER" id="PTHR34939">
    <property type="entry name" value="PHOTOSYSTEM I REACTION CENTER SUBUNIT III, CHLOROPLASTIC"/>
    <property type="match status" value="1"/>
</dbReference>
<dbReference type="PANTHER" id="PTHR34939:SF1">
    <property type="entry name" value="PHOTOSYSTEM I REACTION CENTER SUBUNIT III, CHLOROPLASTIC"/>
    <property type="match status" value="1"/>
</dbReference>
<dbReference type="Pfam" id="PF02507">
    <property type="entry name" value="PSI_PsaF"/>
    <property type="match status" value="1"/>
</dbReference>
<dbReference type="SUPFAM" id="SSF81536">
    <property type="entry name" value="Subunit III of photosystem I reaction centre, PsaF"/>
    <property type="match status" value="1"/>
</dbReference>
<proteinExistence type="evidence at protein level"/>
<evidence type="ECO:0000305" key="1"/>
<evidence type="ECO:0007829" key="2">
    <source>
        <dbReference type="PDB" id="6IJJ"/>
    </source>
</evidence>
<evidence type="ECO:0007829" key="3">
    <source>
        <dbReference type="PDB" id="6JO5"/>
    </source>
</evidence>
<evidence type="ECO:0007829" key="4">
    <source>
        <dbReference type="PDB" id="7BGI"/>
    </source>
</evidence>
<evidence type="ECO:0007829" key="5">
    <source>
        <dbReference type="PDB" id="7R3K"/>
    </source>
</evidence>